<comment type="function">
    <text evidence="1">Associates with the EF-Tu.GDP complex and induces the exchange of GDP to GTP. It remains bound to the aminoacyl-tRNA.EF-Tu.GTP complex up to the GTP hydrolysis stage on the ribosome.</text>
</comment>
<comment type="subcellular location">
    <subcellularLocation>
        <location evidence="1">Cytoplasm</location>
    </subcellularLocation>
</comment>
<comment type="similarity">
    <text evidence="1">Belongs to the EF-Ts family.</text>
</comment>
<feature type="chain" id="PRO_1000006084" description="Elongation factor Ts">
    <location>
        <begin position="1"/>
        <end position="269"/>
    </location>
</feature>
<feature type="region of interest" description="Involved in Mg(2+) ion dislocation from EF-Tu" evidence="1">
    <location>
        <begin position="76"/>
        <end position="79"/>
    </location>
</feature>
<proteinExistence type="inferred from homology"/>
<organism>
    <name type="scientific">Deinococcus geothermalis (strain DSM 11300 / CIP 105573 / AG-3a)</name>
    <dbReference type="NCBI Taxonomy" id="319795"/>
    <lineage>
        <taxon>Bacteria</taxon>
        <taxon>Thermotogati</taxon>
        <taxon>Deinococcota</taxon>
        <taxon>Deinococci</taxon>
        <taxon>Deinococcales</taxon>
        <taxon>Deinococcaceae</taxon>
        <taxon>Deinococcus</taxon>
    </lineage>
</organism>
<accession>Q1IZI7</accession>
<protein>
    <recommendedName>
        <fullName evidence="1">Elongation factor Ts</fullName>
        <shortName evidence="1">EF-Ts</shortName>
    </recommendedName>
</protein>
<name>EFTS_DEIGD</name>
<gene>
    <name evidence="1" type="primary">tsf</name>
    <name type="ordered locus">Dgeo_1048</name>
</gene>
<dbReference type="EMBL" id="CP000359">
    <property type="protein sequence ID" value="ABF45347.1"/>
    <property type="molecule type" value="Genomic_DNA"/>
</dbReference>
<dbReference type="RefSeq" id="WP_011530184.1">
    <property type="nucleotide sequence ID" value="NC_008025.1"/>
</dbReference>
<dbReference type="SMR" id="Q1IZI7"/>
<dbReference type="STRING" id="319795.Dgeo_1048"/>
<dbReference type="KEGG" id="dge:Dgeo_1048"/>
<dbReference type="eggNOG" id="COG0264">
    <property type="taxonomic scope" value="Bacteria"/>
</dbReference>
<dbReference type="HOGENOM" id="CLU_047155_0_2_0"/>
<dbReference type="Proteomes" id="UP000002431">
    <property type="component" value="Chromosome"/>
</dbReference>
<dbReference type="GO" id="GO:0005737">
    <property type="term" value="C:cytoplasm"/>
    <property type="evidence" value="ECO:0007669"/>
    <property type="project" value="UniProtKB-SubCell"/>
</dbReference>
<dbReference type="GO" id="GO:0003746">
    <property type="term" value="F:translation elongation factor activity"/>
    <property type="evidence" value="ECO:0007669"/>
    <property type="project" value="UniProtKB-UniRule"/>
</dbReference>
<dbReference type="CDD" id="cd14275">
    <property type="entry name" value="UBA_EF-Ts"/>
    <property type="match status" value="1"/>
</dbReference>
<dbReference type="FunFam" id="1.10.286.20:FF:000001">
    <property type="entry name" value="Elongation factor Ts"/>
    <property type="match status" value="1"/>
</dbReference>
<dbReference type="FunFam" id="1.10.8.10:FF:000001">
    <property type="entry name" value="Elongation factor Ts"/>
    <property type="match status" value="1"/>
</dbReference>
<dbReference type="Gene3D" id="1.10.286.20">
    <property type="match status" value="1"/>
</dbReference>
<dbReference type="Gene3D" id="1.10.8.10">
    <property type="entry name" value="DNA helicase RuvA subunit, C-terminal domain"/>
    <property type="match status" value="1"/>
</dbReference>
<dbReference type="Gene3D" id="3.30.479.20">
    <property type="entry name" value="Elongation factor Ts, dimerisation domain"/>
    <property type="match status" value="2"/>
</dbReference>
<dbReference type="HAMAP" id="MF_00050">
    <property type="entry name" value="EF_Ts"/>
    <property type="match status" value="1"/>
</dbReference>
<dbReference type="InterPro" id="IPR036402">
    <property type="entry name" value="EF-Ts_dimer_sf"/>
</dbReference>
<dbReference type="InterPro" id="IPR001816">
    <property type="entry name" value="Transl_elong_EFTs/EF1B"/>
</dbReference>
<dbReference type="InterPro" id="IPR014039">
    <property type="entry name" value="Transl_elong_EFTs/EF1B_dimer"/>
</dbReference>
<dbReference type="InterPro" id="IPR018101">
    <property type="entry name" value="Transl_elong_Ts_CS"/>
</dbReference>
<dbReference type="InterPro" id="IPR009060">
    <property type="entry name" value="UBA-like_sf"/>
</dbReference>
<dbReference type="NCBIfam" id="TIGR00116">
    <property type="entry name" value="tsf"/>
    <property type="match status" value="1"/>
</dbReference>
<dbReference type="PANTHER" id="PTHR11741">
    <property type="entry name" value="ELONGATION FACTOR TS"/>
    <property type="match status" value="1"/>
</dbReference>
<dbReference type="PANTHER" id="PTHR11741:SF0">
    <property type="entry name" value="ELONGATION FACTOR TS, MITOCHONDRIAL"/>
    <property type="match status" value="1"/>
</dbReference>
<dbReference type="Pfam" id="PF00889">
    <property type="entry name" value="EF_TS"/>
    <property type="match status" value="1"/>
</dbReference>
<dbReference type="SUPFAM" id="SSF54713">
    <property type="entry name" value="Elongation factor Ts (EF-Ts), dimerisation domain"/>
    <property type="match status" value="2"/>
</dbReference>
<dbReference type="SUPFAM" id="SSF46934">
    <property type="entry name" value="UBA-like"/>
    <property type="match status" value="1"/>
</dbReference>
<dbReference type="PROSITE" id="PS01126">
    <property type="entry name" value="EF_TS_1"/>
    <property type="match status" value="1"/>
</dbReference>
<dbReference type="PROSITE" id="PS01127">
    <property type="entry name" value="EF_TS_2"/>
    <property type="match status" value="1"/>
</dbReference>
<sequence>MMESIKKLRELTGAGMMDVKKALADAGNDEEKAIALLRERGIVKAAKKADREAKEGLVRFVVDGNRAAMVEVNSETDFVARNSDFQALVEQVAQAALRAGTNNVEELRNFTLDNGETVGNAVAAAAGKIGENLVLNRVAYIDAGEGEHVAGYVHSNGKIGVLVDLLGGTEAQAKDVALHVAAERPQYLNRDEVNAADLEKEREILTNKALNEGKPQQIVDKIVQGQIGKFYEERVLPEQKFVKDNSVTVGQYLGNAQVKRFVRFEVGAQ</sequence>
<evidence type="ECO:0000255" key="1">
    <source>
        <dbReference type="HAMAP-Rule" id="MF_00050"/>
    </source>
</evidence>
<keyword id="KW-0963">Cytoplasm</keyword>
<keyword id="KW-0251">Elongation factor</keyword>
<keyword id="KW-0648">Protein biosynthesis</keyword>
<reference key="1">
    <citation type="submission" date="2006-04" db="EMBL/GenBank/DDBJ databases">
        <title>Complete sequence of chromosome of Deinococcus geothermalis DSM 11300.</title>
        <authorList>
            <person name="Copeland A."/>
            <person name="Lucas S."/>
            <person name="Lapidus A."/>
            <person name="Barry K."/>
            <person name="Detter J.C."/>
            <person name="Glavina del Rio T."/>
            <person name="Hammon N."/>
            <person name="Israni S."/>
            <person name="Dalin E."/>
            <person name="Tice H."/>
            <person name="Pitluck S."/>
            <person name="Brettin T."/>
            <person name="Bruce D."/>
            <person name="Han C."/>
            <person name="Tapia R."/>
            <person name="Saunders E."/>
            <person name="Gilna P."/>
            <person name="Schmutz J."/>
            <person name="Larimer F."/>
            <person name="Land M."/>
            <person name="Hauser L."/>
            <person name="Kyrpides N."/>
            <person name="Kim E."/>
            <person name="Daly M.J."/>
            <person name="Fredrickson J.K."/>
            <person name="Makarova K.S."/>
            <person name="Gaidamakova E.K."/>
            <person name="Zhai M."/>
            <person name="Richardson P."/>
        </authorList>
    </citation>
    <scope>NUCLEOTIDE SEQUENCE [LARGE SCALE GENOMIC DNA]</scope>
    <source>
        <strain>DSM 11300 / CIP 105573 / AG-3a</strain>
    </source>
</reference>